<reference key="1">
    <citation type="submission" date="2009-07" db="EMBL/GenBank/DDBJ databases">
        <title>Complete sequence of Pectobacterium carotovorum subsp. carotovorum PC1.</title>
        <authorList>
            <consortium name="US DOE Joint Genome Institute"/>
            <person name="Lucas S."/>
            <person name="Copeland A."/>
            <person name="Lapidus A."/>
            <person name="Glavina del Rio T."/>
            <person name="Tice H."/>
            <person name="Bruce D."/>
            <person name="Goodwin L."/>
            <person name="Pitluck S."/>
            <person name="Munk A.C."/>
            <person name="Brettin T."/>
            <person name="Detter J.C."/>
            <person name="Han C."/>
            <person name="Tapia R."/>
            <person name="Larimer F."/>
            <person name="Land M."/>
            <person name="Hauser L."/>
            <person name="Kyrpides N."/>
            <person name="Mikhailova N."/>
            <person name="Balakrishnan V."/>
            <person name="Glasner J."/>
            <person name="Perna N.T."/>
        </authorList>
    </citation>
    <scope>NUCLEOTIDE SEQUENCE [LARGE SCALE GENOMIC DNA]</scope>
    <source>
        <strain>PC1</strain>
    </source>
</reference>
<comment type="function">
    <text evidence="1">Involved in the modulation of the specificity of the ClpAP-mediated ATP-dependent protein degradation.</text>
</comment>
<comment type="subunit">
    <text evidence="1">Binds to the N-terminal domain of the chaperone ClpA.</text>
</comment>
<comment type="similarity">
    <text evidence="1">Belongs to the ClpS family.</text>
</comment>
<dbReference type="EMBL" id="CP001657">
    <property type="protein sequence ID" value="ACT12752.1"/>
    <property type="molecule type" value="Genomic_DNA"/>
</dbReference>
<dbReference type="RefSeq" id="WP_005967385.1">
    <property type="nucleotide sequence ID" value="NC_012917.1"/>
</dbReference>
<dbReference type="SMR" id="C6DF43"/>
<dbReference type="STRING" id="561230.PC1_1711"/>
<dbReference type="GeneID" id="67793714"/>
<dbReference type="KEGG" id="pct:PC1_1711"/>
<dbReference type="eggNOG" id="COG2127">
    <property type="taxonomic scope" value="Bacteria"/>
</dbReference>
<dbReference type="HOGENOM" id="CLU_134358_2_1_6"/>
<dbReference type="OrthoDB" id="9796121at2"/>
<dbReference type="Proteomes" id="UP000002736">
    <property type="component" value="Chromosome"/>
</dbReference>
<dbReference type="GO" id="GO:0030163">
    <property type="term" value="P:protein catabolic process"/>
    <property type="evidence" value="ECO:0007669"/>
    <property type="project" value="InterPro"/>
</dbReference>
<dbReference type="GO" id="GO:0006508">
    <property type="term" value="P:proteolysis"/>
    <property type="evidence" value="ECO:0007669"/>
    <property type="project" value="UniProtKB-UniRule"/>
</dbReference>
<dbReference type="FunFam" id="3.30.1390.10:FF:000002">
    <property type="entry name" value="ATP-dependent Clp protease adapter protein ClpS"/>
    <property type="match status" value="1"/>
</dbReference>
<dbReference type="Gene3D" id="3.30.1390.10">
    <property type="match status" value="1"/>
</dbReference>
<dbReference type="HAMAP" id="MF_00302">
    <property type="entry name" value="ClpS"/>
    <property type="match status" value="1"/>
</dbReference>
<dbReference type="InterPro" id="IPR022935">
    <property type="entry name" value="ClpS"/>
</dbReference>
<dbReference type="InterPro" id="IPR003769">
    <property type="entry name" value="ClpS_core"/>
</dbReference>
<dbReference type="InterPro" id="IPR014719">
    <property type="entry name" value="Ribosomal_bL12_C/ClpS-like"/>
</dbReference>
<dbReference type="NCBIfam" id="NF000670">
    <property type="entry name" value="PRK00033.1-3"/>
    <property type="match status" value="1"/>
</dbReference>
<dbReference type="NCBIfam" id="NF000672">
    <property type="entry name" value="PRK00033.1-5"/>
    <property type="match status" value="1"/>
</dbReference>
<dbReference type="PANTHER" id="PTHR33473:SF19">
    <property type="entry name" value="ATP-DEPENDENT CLP PROTEASE ADAPTER PROTEIN CLPS"/>
    <property type="match status" value="1"/>
</dbReference>
<dbReference type="PANTHER" id="PTHR33473">
    <property type="entry name" value="ATP-DEPENDENT CLP PROTEASE ADAPTER PROTEIN CLPS1, CHLOROPLASTIC"/>
    <property type="match status" value="1"/>
</dbReference>
<dbReference type="Pfam" id="PF02617">
    <property type="entry name" value="ClpS"/>
    <property type="match status" value="1"/>
</dbReference>
<dbReference type="SUPFAM" id="SSF54736">
    <property type="entry name" value="ClpS-like"/>
    <property type="match status" value="1"/>
</dbReference>
<gene>
    <name evidence="1" type="primary">clpS</name>
    <name type="ordered locus">PC1_1711</name>
</gene>
<name>CLPS_PECCP</name>
<sequence>MGNNSTWSQSENLTADKQKEKLQPPSMYNVVLNNDDYTPMEFVIDVLQKFFSYDIERATQLMLTVHYQGKAICGVFSAEVAETKVVQVNRYARENEHPLLCTLEKA</sequence>
<proteinExistence type="inferred from homology"/>
<organism>
    <name type="scientific">Pectobacterium carotovorum subsp. carotovorum (strain PC1)</name>
    <dbReference type="NCBI Taxonomy" id="561230"/>
    <lineage>
        <taxon>Bacteria</taxon>
        <taxon>Pseudomonadati</taxon>
        <taxon>Pseudomonadota</taxon>
        <taxon>Gammaproteobacteria</taxon>
        <taxon>Enterobacterales</taxon>
        <taxon>Pectobacteriaceae</taxon>
        <taxon>Pectobacterium</taxon>
    </lineage>
</organism>
<accession>C6DF43</accession>
<evidence type="ECO:0000255" key="1">
    <source>
        <dbReference type="HAMAP-Rule" id="MF_00302"/>
    </source>
</evidence>
<evidence type="ECO:0000256" key="2">
    <source>
        <dbReference type="SAM" id="MobiDB-lite"/>
    </source>
</evidence>
<feature type="chain" id="PRO_1000204974" description="ATP-dependent Clp protease adapter protein ClpS">
    <location>
        <begin position="1"/>
        <end position="106"/>
    </location>
</feature>
<feature type="region of interest" description="Disordered" evidence="2">
    <location>
        <begin position="1"/>
        <end position="21"/>
    </location>
</feature>
<feature type="compositionally biased region" description="Polar residues" evidence="2">
    <location>
        <begin position="1"/>
        <end position="13"/>
    </location>
</feature>
<protein>
    <recommendedName>
        <fullName evidence="1">ATP-dependent Clp protease adapter protein ClpS</fullName>
    </recommendedName>
</protein>